<feature type="chain" id="PRO_0000331958" description="Chaperonin GroEL 1">
    <location>
        <begin position="1"/>
        <end position="558"/>
    </location>
</feature>
<feature type="binding site" evidence="1">
    <location>
        <begin position="29"/>
        <end position="32"/>
    </location>
    <ligand>
        <name>ATP</name>
        <dbReference type="ChEBI" id="CHEBI:30616"/>
    </ligand>
</feature>
<feature type="binding site" evidence="1">
    <location>
        <begin position="86"/>
        <end position="90"/>
    </location>
    <ligand>
        <name>ATP</name>
        <dbReference type="ChEBI" id="CHEBI:30616"/>
    </ligand>
</feature>
<feature type="binding site" evidence="1">
    <location>
        <position position="413"/>
    </location>
    <ligand>
        <name>ATP</name>
        <dbReference type="ChEBI" id="CHEBI:30616"/>
    </ligand>
</feature>
<feature type="binding site" evidence="1">
    <location>
        <position position="494"/>
    </location>
    <ligand>
        <name>ATP</name>
        <dbReference type="ChEBI" id="CHEBI:30616"/>
    </ligand>
</feature>
<accession>B0CFQ6</accession>
<evidence type="ECO:0000255" key="1">
    <source>
        <dbReference type="HAMAP-Rule" id="MF_00600"/>
    </source>
</evidence>
<reference key="1">
    <citation type="journal article" date="2008" name="Proc. Natl. Acad. Sci. U.S.A.">
        <title>Niche adaptation and genome expansion in the chlorophyll d-producing cyanobacterium Acaryochloris marina.</title>
        <authorList>
            <person name="Swingley W.D."/>
            <person name="Chen M."/>
            <person name="Cheung P.C."/>
            <person name="Conrad A.L."/>
            <person name="Dejesa L.C."/>
            <person name="Hao J."/>
            <person name="Honchak B.M."/>
            <person name="Karbach L.E."/>
            <person name="Kurdoglu A."/>
            <person name="Lahiri S."/>
            <person name="Mastrian S.D."/>
            <person name="Miyashita H."/>
            <person name="Page L."/>
            <person name="Ramakrishna P."/>
            <person name="Satoh S."/>
            <person name="Sattley W.M."/>
            <person name="Shimada Y."/>
            <person name="Taylor H.L."/>
            <person name="Tomo T."/>
            <person name="Tsuchiya T."/>
            <person name="Wang Z.T."/>
            <person name="Raymond J."/>
            <person name="Mimuro M."/>
            <person name="Blankenship R.E."/>
            <person name="Touchman J.W."/>
        </authorList>
    </citation>
    <scope>NUCLEOTIDE SEQUENCE [LARGE SCALE GENOMIC DNA]</scope>
    <source>
        <strain>MBIC 11017</strain>
    </source>
</reference>
<dbReference type="EC" id="5.6.1.7" evidence="1"/>
<dbReference type="EMBL" id="CP000828">
    <property type="protein sequence ID" value="ABW28210.1"/>
    <property type="molecule type" value="Genomic_DNA"/>
</dbReference>
<dbReference type="SMR" id="B0CFQ6"/>
<dbReference type="STRING" id="329726.AM1_3214"/>
<dbReference type="KEGG" id="amr:AM1_3214"/>
<dbReference type="eggNOG" id="COG0459">
    <property type="taxonomic scope" value="Bacteria"/>
</dbReference>
<dbReference type="HOGENOM" id="CLU_016503_3_0_3"/>
<dbReference type="OrthoDB" id="9766614at2"/>
<dbReference type="Proteomes" id="UP000000268">
    <property type="component" value="Chromosome"/>
</dbReference>
<dbReference type="GO" id="GO:0005737">
    <property type="term" value="C:cytoplasm"/>
    <property type="evidence" value="ECO:0007669"/>
    <property type="project" value="UniProtKB-SubCell"/>
</dbReference>
<dbReference type="GO" id="GO:0005524">
    <property type="term" value="F:ATP binding"/>
    <property type="evidence" value="ECO:0007669"/>
    <property type="project" value="UniProtKB-UniRule"/>
</dbReference>
<dbReference type="GO" id="GO:0140662">
    <property type="term" value="F:ATP-dependent protein folding chaperone"/>
    <property type="evidence" value="ECO:0007669"/>
    <property type="project" value="InterPro"/>
</dbReference>
<dbReference type="GO" id="GO:0016853">
    <property type="term" value="F:isomerase activity"/>
    <property type="evidence" value="ECO:0007669"/>
    <property type="project" value="UniProtKB-KW"/>
</dbReference>
<dbReference type="GO" id="GO:0051082">
    <property type="term" value="F:unfolded protein binding"/>
    <property type="evidence" value="ECO:0007669"/>
    <property type="project" value="UniProtKB-UniRule"/>
</dbReference>
<dbReference type="GO" id="GO:0042026">
    <property type="term" value="P:protein refolding"/>
    <property type="evidence" value="ECO:0007669"/>
    <property type="project" value="UniProtKB-UniRule"/>
</dbReference>
<dbReference type="CDD" id="cd03344">
    <property type="entry name" value="GroEL"/>
    <property type="match status" value="1"/>
</dbReference>
<dbReference type="FunFam" id="3.50.7.10:FF:000001">
    <property type="entry name" value="60 kDa chaperonin"/>
    <property type="match status" value="1"/>
</dbReference>
<dbReference type="Gene3D" id="3.50.7.10">
    <property type="entry name" value="GroEL"/>
    <property type="match status" value="1"/>
</dbReference>
<dbReference type="Gene3D" id="1.10.560.10">
    <property type="entry name" value="GroEL-like equatorial domain"/>
    <property type="match status" value="1"/>
</dbReference>
<dbReference type="Gene3D" id="3.30.260.10">
    <property type="entry name" value="TCP-1-like chaperonin intermediate domain"/>
    <property type="match status" value="1"/>
</dbReference>
<dbReference type="HAMAP" id="MF_00600">
    <property type="entry name" value="CH60"/>
    <property type="match status" value="1"/>
</dbReference>
<dbReference type="InterPro" id="IPR001844">
    <property type="entry name" value="Cpn60/GroEL"/>
</dbReference>
<dbReference type="InterPro" id="IPR002423">
    <property type="entry name" value="Cpn60/GroEL/TCP-1"/>
</dbReference>
<dbReference type="InterPro" id="IPR027409">
    <property type="entry name" value="GroEL-like_apical_dom_sf"/>
</dbReference>
<dbReference type="InterPro" id="IPR027413">
    <property type="entry name" value="GROEL-like_equatorial_sf"/>
</dbReference>
<dbReference type="InterPro" id="IPR027410">
    <property type="entry name" value="TCP-1-like_intermed_sf"/>
</dbReference>
<dbReference type="NCBIfam" id="TIGR02348">
    <property type="entry name" value="GroEL"/>
    <property type="match status" value="1"/>
</dbReference>
<dbReference type="NCBIfam" id="NF000592">
    <property type="entry name" value="PRK00013.1"/>
    <property type="match status" value="1"/>
</dbReference>
<dbReference type="NCBIfam" id="NF009487">
    <property type="entry name" value="PRK12849.1"/>
    <property type="match status" value="1"/>
</dbReference>
<dbReference type="NCBIfam" id="NF009488">
    <property type="entry name" value="PRK12850.1"/>
    <property type="match status" value="1"/>
</dbReference>
<dbReference type="NCBIfam" id="NF009489">
    <property type="entry name" value="PRK12851.1"/>
    <property type="match status" value="1"/>
</dbReference>
<dbReference type="PANTHER" id="PTHR45633">
    <property type="entry name" value="60 KDA HEAT SHOCK PROTEIN, MITOCHONDRIAL"/>
    <property type="match status" value="1"/>
</dbReference>
<dbReference type="Pfam" id="PF00118">
    <property type="entry name" value="Cpn60_TCP1"/>
    <property type="match status" value="1"/>
</dbReference>
<dbReference type="PRINTS" id="PR00298">
    <property type="entry name" value="CHAPERONIN60"/>
</dbReference>
<dbReference type="SUPFAM" id="SSF52029">
    <property type="entry name" value="GroEL apical domain-like"/>
    <property type="match status" value="1"/>
</dbReference>
<dbReference type="SUPFAM" id="SSF48592">
    <property type="entry name" value="GroEL equatorial domain-like"/>
    <property type="match status" value="2"/>
</dbReference>
<comment type="function">
    <text evidence="1">Together with its co-chaperonin GroES, plays an essential role in assisting protein folding. The GroEL-GroES system forms a nano-cage that allows encapsulation of the non-native substrate proteins and provides a physical environment optimized to promote and accelerate protein folding.</text>
</comment>
<comment type="catalytic activity">
    <reaction evidence="1">
        <text>ATP + H2O + a folded polypeptide = ADP + phosphate + an unfolded polypeptide.</text>
        <dbReference type="EC" id="5.6.1.7"/>
    </reaction>
</comment>
<comment type="subunit">
    <text evidence="1">Forms a cylinder of 14 subunits composed of two heptameric rings stacked back-to-back. Interacts with the co-chaperonin GroES.</text>
</comment>
<comment type="subcellular location">
    <subcellularLocation>
        <location evidence="1">Cytoplasm</location>
    </subcellularLocation>
</comment>
<comment type="similarity">
    <text evidence="1">Belongs to the chaperonin (HSP60) family.</text>
</comment>
<gene>
    <name evidence="1" type="primary">groEL1</name>
    <name evidence="1" type="synonym">groL1</name>
    <name type="ordered locus">AM1_3214</name>
</gene>
<organism>
    <name type="scientific">Acaryochloris marina (strain MBIC 11017)</name>
    <dbReference type="NCBI Taxonomy" id="329726"/>
    <lineage>
        <taxon>Bacteria</taxon>
        <taxon>Bacillati</taxon>
        <taxon>Cyanobacteriota</taxon>
        <taxon>Cyanophyceae</taxon>
        <taxon>Acaryochloridales</taxon>
        <taxon>Acaryochloridaceae</taxon>
        <taxon>Acaryochloris</taxon>
    </lineage>
</organism>
<name>CH601_ACAM1</name>
<keyword id="KW-0067">ATP-binding</keyword>
<keyword id="KW-0143">Chaperone</keyword>
<keyword id="KW-0963">Cytoplasm</keyword>
<keyword id="KW-0413">Isomerase</keyword>
<keyword id="KW-0547">Nucleotide-binding</keyword>
<keyword id="KW-1185">Reference proteome</keyword>
<proteinExistence type="inferred from homology"/>
<sequence>MAKHVVFDEESRRALERGVNSLADAVRITLGPKGRNVVLEKKFGAPQIINDGVTIAKEVELEDPLENAGAQLMREVASKTNDVAGDGTTTATVLAQALIREGLKNVAAGANPVALRKGIDKTIDALVKEIEAKSKPVAGDAIAQVATISAGNDTEVGQMIAQAMDKVGKDGVITVEESKSLATEMEIVEGMQIDRGYISPYFVTDAERMVAEIENARLLIVNKKISSLQDLVGILEQVARAGQPLLIIAEDLEGEALATLVVNKLRGVLNVVAIKAPGFGERRQAMLQDIAVLTGGQVISEDVGLTLDKVDLEMLGTARKVTISKDNTTIVSEAANAGDVGKRVEQLRRQLDETDSEYDKEKLQERIAKLAGGVAVIKVGAATETELKDRKLRIEDALNATKAAVAEGIVPGGGTTLIHLTKTIESVKAQLKDEEKVGADLVGIALEAPLTQIADNAGKEGAVVVEKVRDADFSYGYNAMTDTYEDMIAAGVVDPAKVVRSGLQNAGSIAGMVLTTEALVVDKPEPAGAAAPDMGGMGGMGGMGGMGGMGGMGGMGMM</sequence>
<protein>
    <recommendedName>
        <fullName evidence="1">Chaperonin GroEL 1</fullName>
        <ecNumber evidence="1">5.6.1.7</ecNumber>
    </recommendedName>
    <alternativeName>
        <fullName evidence="1">60 kDa chaperonin 1</fullName>
    </alternativeName>
    <alternativeName>
        <fullName evidence="1">Chaperonin-60 1</fullName>
        <shortName evidence="1">Cpn60 1</shortName>
    </alternativeName>
</protein>